<protein>
    <recommendedName>
        <fullName evidence="1">GTPase Der</fullName>
    </recommendedName>
    <alternativeName>
        <fullName evidence="1">GTP-binding protein EngA</fullName>
    </alternativeName>
</protein>
<sequence length="436" mass="48618">MPKPVIAIVGRPNVGKSTIFNRIVGERVSIVEDIPGVTRDRIYSAGEWLNHEFNIIDTGGIDIGDEPFLTQIRQQAEVAIDEADVIIFMTNGRDGVTAADEEVAKILYRSNKPVVLAVNKVDNPEMRSDIYDFYALGFGEPFPISGTHGLGLGDLLDEAAQHFPKIEEDGYDEDTIRFSLIGRPNVGKSSLVNALLGQERVIVSNVAGTTRDAVDTPYSKDGKDYVIIDTAGMRKKGKVYESTEKYSVLRALRAIERSDVVLVVLDGEEGIIEQDKKIAGYAHDSGRAVVIVVNKWDAVKKDEKTMKAFEENIRAHFQFLEYAPIVFLSAKTRKRTQTLIPVIDEVNESHSIRIQTNVLNDVIMDAVAMNPTPTHNGSRLKIFYATQVAVKPPTFVVFVNDPELLHFSYERFLKNRLRESFGFVGTPIHIIARARD</sequence>
<name>DER_BACAA</name>
<comment type="function">
    <text evidence="1">GTPase that plays an essential role in the late steps of ribosome biogenesis.</text>
</comment>
<comment type="subunit">
    <text evidence="1">Associates with the 50S ribosomal subunit.</text>
</comment>
<comment type="similarity">
    <text evidence="1">Belongs to the TRAFAC class TrmE-Era-EngA-EngB-Septin-like GTPase superfamily. EngA (Der) GTPase family.</text>
</comment>
<accession>C3P591</accession>
<feature type="chain" id="PRO_1000124339" description="GTPase Der">
    <location>
        <begin position="1"/>
        <end position="436"/>
    </location>
</feature>
<feature type="domain" description="EngA-type G 1">
    <location>
        <begin position="4"/>
        <end position="167"/>
    </location>
</feature>
<feature type="domain" description="EngA-type G 2">
    <location>
        <begin position="176"/>
        <end position="351"/>
    </location>
</feature>
<feature type="domain" description="KH-like" evidence="1">
    <location>
        <begin position="352"/>
        <end position="436"/>
    </location>
</feature>
<feature type="binding site" evidence="1">
    <location>
        <begin position="10"/>
        <end position="17"/>
    </location>
    <ligand>
        <name>GTP</name>
        <dbReference type="ChEBI" id="CHEBI:37565"/>
        <label>1</label>
    </ligand>
</feature>
<feature type="binding site" evidence="1">
    <location>
        <begin position="57"/>
        <end position="61"/>
    </location>
    <ligand>
        <name>GTP</name>
        <dbReference type="ChEBI" id="CHEBI:37565"/>
        <label>1</label>
    </ligand>
</feature>
<feature type="binding site" evidence="1">
    <location>
        <begin position="119"/>
        <end position="122"/>
    </location>
    <ligand>
        <name>GTP</name>
        <dbReference type="ChEBI" id="CHEBI:37565"/>
        <label>1</label>
    </ligand>
</feature>
<feature type="binding site" evidence="1">
    <location>
        <begin position="182"/>
        <end position="189"/>
    </location>
    <ligand>
        <name>GTP</name>
        <dbReference type="ChEBI" id="CHEBI:37565"/>
        <label>2</label>
    </ligand>
</feature>
<feature type="binding site" evidence="1">
    <location>
        <begin position="229"/>
        <end position="233"/>
    </location>
    <ligand>
        <name>GTP</name>
        <dbReference type="ChEBI" id="CHEBI:37565"/>
        <label>2</label>
    </ligand>
</feature>
<feature type="binding site" evidence="1">
    <location>
        <begin position="294"/>
        <end position="297"/>
    </location>
    <ligand>
        <name>GTP</name>
        <dbReference type="ChEBI" id="CHEBI:37565"/>
        <label>2</label>
    </ligand>
</feature>
<keyword id="KW-0342">GTP-binding</keyword>
<keyword id="KW-0547">Nucleotide-binding</keyword>
<keyword id="KW-0677">Repeat</keyword>
<keyword id="KW-0690">Ribosome biogenesis</keyword>
<evidence type="ECO:0000255" key="1">
    <source>
        <dbReference type="HAMAP-Rule" id="MF_00195"/>
    </source>
</evidence>
<proteinExistence type="inferred from homology"/>
<dbReference type="EMBL" id="CP001598">
    <property type="protein sequence ID" value="ACQ48187.1"/>
    <property type="molecule type" value="Genomic_DNA"/>
</dbReference>
<dbReference type="RefSeq" id="WP_001125893.1">
    <property type="nucleotide sequence ID" value="NC_012659.1"/>
</dbReference>
<dbReference type="SMR" id="C3P591"/>
<dbReference type="GeneID" id="93009536"/>
<dbReference type="KEGG" id="bai:BAA_1594"/>
<dbReference type="HOGENOM" id="CLU_016077_6_2_9"/>
<dbReference type="GO" id="GO:0005525">
    <property type="term" value="F:GTP binding"/>
    <property type="evidence" value="ECO:0007669"/>
    <property type="project" value="UniProtKB-UniRule"/>
</dbReference>
<dbReference type="GO" id="GO:0043022">
    <property type="term" value="F:ribosome binding"/>
    <property type="evidence" value="ECO:0007669"/>
    <property type="project" value="TreeGrafter"/>
</dbReference>
<dbReference type="GO" id="GO:0042254">
    <property type="term" value="P:ribosome biogenesis"/>
    <property type="evidence" value="ECO:0007669"/>
    <property type="project" value="UniProtKB-KW"/>
</dbReference>
<dbReference type="CDD" id="cd01894">
    <property type="entry name" value="EngA1"/>
    <property type="match status" value="1"/>
</dbReference>
<dbReference type="CDD" id="cd01895">
    <property type="entry name" value="EngA2"/>
    <property type="match status" value="1"/>
</dbReference>
<dbReference type="FunFam" id="3.30.300.20:FF:000004">
    <property type="entry name" value="GTPase Der"/>
    <property type="match status" value="1"/>
</dbReference>
<dbReference type="FunFam" id="3.40.50.300:FF:000040">
    <property type="entry name" value="GTPase Der"/>
    <property type="match status" value="1"/>
</dbReference>
<dbReference type="FunFam" id="3.40.50.300:FF:000057">
    <property type="entry name" value="GTPase Der"/>
    <property type="match status" value="1"/>
</dbReference>
<dbReference type="Gene3D" id="3.30.300.20">
    <property type="match status" value="1"/>
</dbReference>
<dbReference type="Gene3D" id="3.40.50.300">
    <property type="entry name" value="P-loop containing nucleotide triphosphate hydrolases"/>
    <property type="match status" value="2"/>
</dbReference>
<dbReference type="HAMAP" id="MF_00195">
    <property type="entry name" value="GTPase_Der"/>
    <property type="match status" value="1"/>
</dbReference>
<dbReference type="InterPro" id="IPR031166">
    <property type="entry name" value="G_ENGA"/>
</dbReference>
<dbReference type="InterPro" id="IPR006073">
    <property type="entry name" value="GTP-bd"/>
</dbReference>
<dbReference type="InterPro" id="IPR016484">
    <property type="entry name" value="GTPase_Der"/>
</dbReference>
<dbReference type="InterPro" id="IPR032859">
    <property type="entry name" value="KH_dom-like"/>
</dbReference>
<dbReference type="InterPro" id="IPR015946">
    <property type="entry name" value="KH_dom-like_a/b"/>
</dbReference>
<dbReference type="InterPro" id="IPR027417">
    <property type="entry name" value="P-loop_NTPase"/>
</dbReference>
<dbReference type="InterPro" id="IPR005225">
    <property type="entry name" value="Small_GTP-bd"/>
</dbReference>
<dbReference type="NCBIfam" id="TIGR03594">
    <property type="entry name" value="GTPase_EngA"/>
    <property type="match status" value="1"/>
</dbReference>
<dbReference type="NCBIfam" id="TIGR00231">
    <property type="entry name" value="small_GTP"/>
    <property type="match status" value="2"/>
</dbReference>
<dbReference type="PANTHER" id="PTHR43834">
    <property type="entry name" value="GTPASE DER"/>
    <property type="match status" value="1"/>
</dbReference>
<dbReference type="PANTHER" id="PTHR43834:SF6">
    <property type="entry name" value="GTPASE DER"/>
    <property type="match status" value="1"/>
</dbReference>
<dbReference type="Pfam" id="PF14714">
    <property type="entry name" value="KH_dom-like"/>
    <property type="match status" value="1"/>
</dbReference>
<dbReference type="Pfam" id="PF01926">
    <property type="entry name" value="MMR_HSR1"/>
    <property type="match status" value="2"/>
</dbReference>
<dbReference type="PIRSF" id="PIRSF006485">
    <property type="entry name" value="GTP-binding_EngA"/>
    <property type="match status" value="1"/>
</dbReference>
<dbReference type="PRINTS" id="PR00326">
    <property type="entry name" value="GTP1OBG"/>
</dbReference>
<dbReference type="SUPFAM" id="SSF52540">
    <property type="entry name" value="P-loop containing nucleoside triphosphate hydrolases"/>
    <property type="match status" value="2"/>
</dbReference>
<dbReference type="PROSITE" id="PS51712">
    <property type="entry name" value="G_ENGA"/>
    <property type="match status" value="2"/>
</dbReference>
<reference key="1">
    <citation type="submission" date="2009-04" db="EMBL/GenBank/DDBJ databases">
        <title>Genome sequence of Bacillus anthracis A0248.</title>
        <authorList>
            <person name="Dodson R.J."/>
            <person name="Munk A.C."/>
            <person name="Bruce D."/>
            <person name="Detter C."/>
            <person name="Tapia R."/>
            <person name="Sutton G."/>
            <person name="Sims D."/>
            <person name="Brettin T."/>
        </authorList>
    </citation>
    <scope>NUCLEOTIDE SEQUENCE [LARGE SCALE GENOMIC DNA]</scope>
    <source>
        <strain>A0248</strain>
    </source>
</reference>
<gene>
    <name evidence="1" type="primary">der</name>
    <name type="synonym">engA</name>
    <name type="ordered locus">BAA_1594</name>
</gene>
<organism>
    <name type="scientific">Bacillus anthracis (strain A0248)</name>
    <dbReference type="NCBI Taxonomy" id="592021"/>
    <lineage>
        <taxon>Bacteria</taxon>
        <taxon>Bacillati</taxon>
        <taxon>Bacillota</taxon>
        <taxon>Bacilli</taxon>
        <taxon>Bacillales</taxon>
        <taxon>Bacillaceae</taxon>
        <taxon>Bacillus</taxon>
        <taxon>Bacillus cereus group</taxon>
    </lineage>
</organism>